<comment type="function">
    <text evidence="1">Catalyzes the condensation of iminoaspartate with dihydroxyacetone phosphate to form quinolinate.</text>
</comment>
<comment type="catalytic activity">
    <reaction evidence="1">
        <text>iminosuccinate + dihydroxyacetone phosphate = quinolinate + phosphate + 2 H2O + H(+)</text>
        <dbReference type="Rhea" id="RHEA:25888"/>
        <dbReference type="ChEBI" id="CHEBI:15377"/>
        <dbReference type="ChEBI" id="CHEBI:15378"/>
        <dbReference type="ChEBI" id="CHEBI:29959"/>
        <dbReference type="ChEBI" id="CHEBI:43474"/>
        <dbReference type="ChEBI" id="CHEBI:57642"/>
        <dbReference type="ChEBI" id="CHEBI:77875"/>
        <dbReference type="EC" id="2.5.1.72"/>
    </reaction>
    <physiologicalReaction direction="left-to-right" evidence="1">
        <dbReference type="Rhea" id="RHEA:25889"/>
    </physiologicalReaction>
</comment>
<comment type="cofactor">
    <cofactor evidence="1">
        <name>[4Fe-4S] cluster</name>
        <dbReference type="ChEBI" id="CHEBI:49883"/>
    </cofactor>
    <text evidence="1">Binds 1 [4Fe-4S] cluster per subunit.</text>
</comment>
<comment type="pathway">
    <text evidence="1">Cofactor biosynthesis; NAD(+) biosynthesis; quinolinate from iminoaspartate: step 1/1.</text>
</comment>
<comment type="subcellular location">
    <subcellularLocation>
        <location evidence="1">Cytoplasm</location>
    </subcellularLocation>
</comment>
<comment type="similarity">
    <text evidence="1">Belongs to the quinolinate synthase family. Type 1 subfamily.</text>
</comment>
<dbReference type="EC" id="2.5.1.72" evidence="1"/>
<dbReference type="EMBL" id="AL513382">
    <property type="protein sequence ID" value="CAD05213.1"/>
    <property type="molecule type" value="Genomic_DNA"/>
</dbReference>
<dbReference type="EMBL" id="AE014613">
    <property type="protein sequence ID" value="AAO69739.1"/>
    <property type="molecule type" value="Genomic_DNA"/>
</dbReference>
<dbReference type="RefSeq" id="NP_455307.1">
    <property type="nucleotide sequence ID" value="NC_003198.1"/>
</dbReference>
<dbReference type="RefSeq" id="WP_000115355.1">
    <property type="nucleotide sequence ID" value="NZ_WSUR01000021.1"/>
</dbReference>
<dbReference type="SMR" id="Q8Z8B8"/>
<dbReference type="STRING" id="220341.gene:17584803"/>
<dbReference type="KEGG" id="stt:t2122"/>
<dbReference type="KEGG" id="sty:STY0797"/>
<dbReference type="PATRIC" id="fig|220341.7.peg.802"/>
<dbReference type="eggNOG" id="COG0379">
    <property type="taxonomic scope" value="Bacteria"/>
</dbReference>
<dbReference type="HOGENOM" id="CLU_047382_1_0_6"/>
<dbReference type="OMA" id="CFCSTMN"/>
<dbReference type="OrthoDB" id="9801204at2"/>
<dbReference type="UniPathway" id="UPA00253">
    <property type="reaction ID" value="UER00327"/>
</dbReference>
<dbReference type="Proteomes" id="UP000000541">
    <property type="component" value="Chromosome"/>
</dbReference>
<dbReference type="Proteomes" id="UP000002670">
    <property type="component" value="Chromosome"/>
</dbReference>
<dbReference type="GO" id="GO:0005829">
    <property type="term" value="C:cytosol"/>
    <property type="evidence" value="ECO:0007669"/>
    <property type="project" value="TreeGrafter"/>
</dbReference>
<dbReference type="GO" id="GO:0051539">
    <property type="term" value="F:4 iron, 4 sulfur cluster binding"/>
    <property type="evidence" value="ECO:0007669"/>
    <property type="project" value="UniProtKB-KW"/>
</dbReference>
<dbReference type="GO" id="GO:0046872">
    <property type="term" value="F:metal ion binding"/>
    <property type="evidence" value="ECO:0007669"/>
    <property type="project" value="UniProtKB-KW"/>
</dbReference>
<dbReference type="GO" id="GO:0008987">
    <property type="term" value="F:quinolinate synthetase A activity"/>
    <property type="evidence" value="ECO:0007669"/>
    <property type="project" value="UniProtKB-UniRule"/>
</dbReference>
<dbReference type="GO" id="GO:0034628">
    <property type="term" value="P:'de novo' NAD biosynthetic process from L-aspartate"/>
    <property type="evidence" value="ECO:0007669"/>
    <property type="project" value="TreeGrafter"/>
</dbReference>
<dbReference type="FunFam" id="3.40.50.10800:FF:000003">
    <property type="entry name" value="Quinolinate synthase A"/>
    <property type="match status" value="1"/>
</dbReference>
<dbReference type="Gene3D" id="3.40.50.10800">
    <property type="entry name" value="NadA-like"/>
    <property type="match status" value="3"/>
</dbReference>
<dbReference type="HAMAP" id="MF_00567">
    <property type="entry name" value="NadA_type1"/>
    <property type="match status" value="1"/>
</dbReference>
<dbReference type="InterPro" id="IPR003473">
    <property type="entry name" value="NadA"/>
</dbReference>
<dbReference type="InterPro" id="IPR036094">
    <property type="entry name" value="NadA_sf"/>
</dbReference>
<dbReference type="InterPro" id="IPR023513">
    <property type="entry name" value="Quinolinate_synth_A_type1"/>
</dbReference>
<dbReference type="NCBIfam" id="TIGR00550">
    <property type="entry name" value="nadA"/>
    <property type="match status" value="1"/>
</dbReference>
<dbReference type="NCBIfam" id="NF006877">
    <property type="entry name" value="PRK09375.1-1"/>
    <property type="match status" value="1"/>
</dbReference>
<dbReference type="NCBIfam" id="NF006878">
    <property type="entry name" value="PRK09375.1-2"/>
    <property type="match status" value="1"/>
</dbReference>
<dbReference type="PANTHER" id="PTHR30573:SF0">
    <property type="entry name" value="QUINOLINATE SYNTHASE, CHLOROPLASTIC"/>
    <property type="match status" value="1"/>
</dbReference>
<dbReference type="PANTHER" id="PTHR30573">
    <property type="entry name" value="QUINOLINATE SYNTHETASE A"/>
    <property type="match status" value="1"/>
</dbReference>
<dbReference type="Pfam" id="PF02445">
    <property type="entry name" value="NadA"/>
    <property type="match status" value="1"/>
</dbReference>
<dbReference type="SUPFAM" id="SSF142754">
    <property type="entry name" value="NadA-like"/>
    <property type="match status" value="1"/>
</dbReference>
<sequence length="347" mass="38074">MSVMFDSQAAIYPFPPKPTPLNDDEKQFYREKIKRLLKERNAVMVAHYYTDPEIQQLAEETGGCISDSLEMARFGAKHAASTLLVAGVRFMGETAKILSPEKNVLMPTLAAECSLDLGCPIDEFSAFCDAHPDRTVVVYANTSAAVKARADWVVTSSIAVELIEHLDSLGEKIIWAPDRHLGNYVQKQTRADVLCWQGACIVHDEFKTQALTRLKKIYPDAAILVHPESPRSIVEMADAVGSTSQLIKAAKTLPHRQLIVATDRGIFYKMQQAVPDKELLEAPTAGEGATCRSCAHCPWMAMNGLKAIAEGLEQGGAAHEIQVDAALRESALLPLNRMLDFAATLRV</sequence>
<feature type="chain" id="PRO_0000155769" description="Quinolinate synthase">
    <location>
        <begin position="1"/>
        <end position="347"/>
    </location>
</feature>
<feature type="binding site" evidence="1">
    <location>
        <position position="47"/>
    </location>
    <ligand>
        <name>iminosuccinate</name>
        <dbReference type="ChEBI" id="CHEBI:77875"/>
    </ligand>
</feature>
<feature type="binding site" evidence="1">
    <location>
        <position position="68"/>
    </location>
    <ligand>
        <name>iminosuccinate</name>
        <dbReference type="ChEBI" id="CHEBI:77875"/>
    </ligand>
</feature>
<feature type="binding site" evidence="1">
    <location>
        <position position="113"/>
    </location>
    <ligand>
        <name>[4Fe-4S] cluster</name>
        <dbReference type="ChEBI" id="CHEBI:49883"/>
    </ligand>
</feature>
<feature type="binding site" evidence="1">
    <location>
        <begin position="139"/>
        <end position="141"/>
    </location>
    <ligand>
        <name>iminosuccinate</name>
        <dbReference type="ChEBI" id="CHEBI:77875"/>
    </ligand>
</feature>
<feature type="binding site" evidence="1">
    <location>
        <position position="156"/>
    </location>
    <ligand>
        <name>iminosuccinate</name>
        <dbReference type="ChEBI" id="CHEBI:77875"/>
    </ligand>
</feature>
<feature type="binding site" evidence="1">
    <location>
        <position position="200"/>
    </location>
    <ligand>
        <name>[4Fe-4S] cluster</name>
        <dbReference type="ChEBI" id="CHEBI:49883"/>
    </ligand>
</feature>
<feature type="binding site" evidence="1">
    <location>
        <begin position="226"/>
        <end position="228"/>
    </location>
    <ligand>
        <name>iminosuccinate</name>
        <dbReference type="ChEBI" id="CHEBI:77875"/>
    </ligand>
</feature>
<feature type="binding site" evidence="1">
    <location>
        <position position="243"/>
    </location>
    <ligand>
        <name>iminosuccinate</name>
        <dbReference type="ChEBI" id="CHEBI:77875"/>
    </ligand>
</feature>
<feature type="binding site" evidence="1">
    <location>
        <position position="297"/>
    </location>
    <ligand>
        <name>[4Fe-4S] cluster</name>
        <dbReference type="ChEBI" id="CHEBI:49883"/>
    </ligand>
</feature>
<accession>Q8Z8B8</accession>
<evidence type="ECO:0000255" key="1">
    <source>
        <dbReference type="HAMAP-Rule" id="MF_00567"/>
    </source>
</evidence>
<name>NADA_SALTI</name>
<proteinExistence type="inferred from homology"/>
<gene>
    <name evidence="1" type="primary">nadA</name>
    <name type="ordered locus">STY0797</name>
    <name type="ordered locus">t2122</name>
</gene>
<reference key="1">
    <citation type="journal article" date="2001" name="Nature">
        <title>Complete genome sequence of a multiple drug resistant Salmonella enterica serovar Typhi CT18.</title>
        <authorList>
            <person name="Parkhill J."/>
            <person name="Dougan G."/>
            <person name="James K.D."/>
            <person name="Thomson N.R."/>
            <person name="Pickard D."/>
            <person name="Wain J."/>
            <person name="Churcher C.M."/>
            <person name="Mungall K.L."/>
            <person name="Bentley S.D."/>
            <person name="Holden M.T.G."/>
            <person name="Sebaihia M."/>
            <person name="Baker S."/>
            <person name="Basham D."/>
            <person name="Brooks K."/>
            <person name="Chillingworth T."/>
            <person name="Connerton P."/>
            <person name="Cronin A."/>
            <person name="Davis P."/>
            <person name="Davies R.M."/>
            <person name="Dowd L."/>
            <person name="White N."/>
            <person name="Farrar J."/>
            <person name="Feltwell T."/>
            <person name="Hamlin N."/>
            <person name="Haque A."/>
            <person name="Hien T.T."/>
            <person name="Holroyd S."/>
            <person name="Jagels K."/>
            <person name="Krogh A."/>
            <person name="Larsen T.S."/>
            <person name="Leather S."/>
            <person name="Moule S."/>
            <person name="O'Gaora P."/>
            <person name="Parry C."/>
            <person name="Quail M.A."/>
            <person name="Rutherford K.M."/>
            <person name="Simmonds M."/>
            <person name="Skelton J."/>
            <person name="Stevens K."/>
            <person name="Whitehead S."/>
            <person name="Barrell B.G."/>
        </authorList>
    </citation>
    <scope>NUCLEOTIDE SEQUENCE [LARGE SCALE GENOMIC DNA]</scope>
    <source>
        <strain>CT18</strain>
    </source>
</reference>
<reference key="2">
    <citation type="journal article" date="2003" name="J. Bacteriol.">
        <title>Comparative genomics of Salmonella enterica serovar Typhi strains Ty2 and CT18.</title>
        <authorList>
            <person name="Deng W."/>
            <person name="Liou S.-R."/>
            <person name="Plunkett G. III"/>
            <person name="Mayhew G.F."/>
            <person name="Rose D.J."/>
            <person name="Burland V."/>
            <person name="Kodoyianni V."/>
            <person name="Schwartz D.C."/>
            <person name="Blattner F.R."/>
        </authorList>
    </citation>
    <scope>NUCLEOTIDE SEQUENCE [LARGE SCALE GENOMIC DNA]</scope>
    <source>
        <strain>ATCC 700931 / Ty2</strain>
    </source>
</reference>
<keyword id="KW-0004">4Fe-4S</keyword>
<keyword id="KW-0963">Cytoplasm</keyword>
<keyword id="KW-0408">Iron</keyword>
<keyword id="KW-0411">Iron-sulfur</keyword>
<keyword id="KW-0479">Metal-binding</keyword>
<keyword id="KW-0662">Pyridine nucleotide biosynthesis</keyword>
<keyword id="KW-0808">Transferase</keyword>
<organism>
    <name type="scientific">Salmonella typhi</name>
    <dbReference type="NCBI Taxonomy" id="90370"/>
    <lineage>
        <taxon>Bacteria</taxon>
        <taxon>Pseudomonadati</taxon>
        <taxon>Pseudomonadota</taxon>
        <taxon>Gammaproteobacteria</taxon>
        <taxon>Enterobacterales</taxon>
        <taxon>Enterobacteriaceae</taxon>
        <taxon>Salmonella</taxon>
    </lineage>
</organism>
<protein>
    <recommendedName>
        <fullName evidence="1">Quinolinate synthase</fullName>
        <ecNumber evidence="1">2.5.1.72</ecNumber>
    </recommendedName>
</protein>